<proteinExistence type="inferred from homology"/>
<reference key="1">
    <citation type="journal article" date="2004" name="Mol. Plant Microbe Interact.">
        <title>The genome sequence of the Gram-positive sugarcane pathogen Leifsonia xyli subsp. xyli.</title>
        <authorList>
            <person name="Monteiro-Vitorello C.B."/>
            <person name="Camargo L.E.A."/>
            <person name="Van Sluys M.A."/>
            <person name="Kitajima J.P."/>
            <person name="Truffi D."/>
            <person name="do Amaral A.M."/>
            <person name="Harakava R."/>
            <person name="de Oliveira J.C.F."/>
            <person name="Wood D."/>
            <person name="de Oliveira M.C."/>
            <person name="Miyaki C.Y."/>
            <person name="Takita M.A."/>
            <person name="da Silva A.C.R."/>
            <person name="Furlan L.R."/>
            <person name="Carraro D.M."/>
            <person name="Camarotte G."/>
            <person name="Almeida N.F. Jr."/>
            <person name="Carrer H."/>
            <person name="Coutinho L.L."/>
            <person name="El-Dorry H.A."/>
            <person name="Ferro M.I.T."/>
            <person name="Gagliardi P.R."/>
            <person name="Giglioti E."/>
            <person name="Goldman M.H.S."/>
            <person name="Goldman G.H."/>
            <person name="Kimura E.T."/>
            <person name="Ferro E.S."/>
            <person name="Kuramae E.E."/>
            <person name="Lemos E.G.M."/>
            <person name="Lemos M.V.F."/>
            <person name="Mauro S.M.Z."/>
            <person name="Machado M.A."/>
            <person name="Marino C.L."/>
            <person name="Menck C.F."/>
            <person name="Nunes L.R."/>
            <person name="Oliveira R.C."/>
            <person name="Pereira G.G."/>
            <person name="Siqueira W."/>
            <person name="de Souza A.A."/>
            <person name="Tsai S.M."/>
            <person name="Zanca A.S."/>
            <person name="Simpson A.J.G."/>
            <person name="Brumbley S.M."/>
            <person name="Setubal J.C."/>
        </authorList>
    </citation>
    <scope>NUCLEOTIDE SEQUENCE [LARGE SCALE GENOMIC DNA]</scope>
    <source>
        <strain>CTCB07</strain>
    </source>
</reference>
<accession>Q6AE64</accession>
<comment type="function">
    <text evidence="1">Cell wall formation. Catalyzes the transfer of a GlcNAc subunit on undecaprenyl-pyrophosphoryl-MurNAc-pentapeptide (lipid intermediate I) to form undecaprenyl-pyrophosphoryl-MurNAc-(pentapeptide)GlcNAc (lipid intermediate II).</text>
</comment>
<comment type="catalytic activity">
    <reaction evidence="1">
        <text>di-trans,octa-cis-undecaprenyl diphospho-N-acetyl-alpha-D-muramoyl-L-alanyl-D-glutamyl-meso-2,6-diaminopimeloyl-D-alanyl-D-alanine + UDP-N-acetyl-alpha-D-glucosamine = di-trans,octa-cis-undecaprenyl diphospho-[N-acetyl-alpha-D-glucosaminyl-(1-&gt;4)]-N-acetyl-alpha-D-muramoyl-L-alanyl-D-glutamyl-meso-2,6-diaminopimeloyl-D-alanyl-D-alanine + UDP + H(+)</text>
        <dbReference type="Rhea" id="RHEA:31227"/>
        <dbReference type="ChEBI" id="CHEBI:15378"/>
        <dbReference type="ChEBI" id="CHEBI:57705"/>
        <dbReference type="ChEBI" id="CHEBI:58223"/>
        <dbReference type="ChEBI" id="CHEBI:61387"/>
        <dbReference type="ChEBI" id="CHEBI:61388"/>
        <dbReference type="EC" id="2.4.1.227"/>
    </reaction>
</comment>
<comment type="pathway">
    <text evidence="1">Cell wall biogenesis; peptidoglycan biosynthesis.</text>
</comment>
<comment type="subcellular location">
    <subcellularLocation>
        <location evidence="1">Cell membrane</location>
        <topology evidence="1">Peripheral membrane protein</topology>
        <orientation evidence="1">Cytoplasmic side</orientation>
    </subcellularLocation>
</comment>
<comment type="similarity">
    <text evidence="1">Belongs to the glycosyltransferase 28 family. MurG subfamily.</text>
</comment>
<protein>
    <recommendedName>
        <fullName evidence="1">UDP-N-acetylglucosamine--N-acetylmuramyl-(pentapeptide) pyrophosphoryl-undecaprenol N-acetylglucosamine transferase</fullName>
        <ecNumber evidence="1">2.4.1.227</ecNumber>
    </recommendedName>
    <alternativeName>
        <fullName evidence="1">Undecaprenyl-PP-MurNAc-pentapeptide-UDPGlcNAc GlcNAc transferase</fullName>
    </alternativeName>
</protein>
<feature type="chain" id="PRO_0000225066" description="UDP-N-acetylglucosamine--N-acetylmuramyl-(pentapeptide) pyrophosphoryl-undecaprenol N-acetylglucosamine transferase">
    <location>
        <begin position="1"/>
        <end position="358"/>
    </location>
</feature>
<feature type="binding site" evidence="1">
    <location>
        <begin position="11"/>
        <end position="13"/>
    </location>
    <ligand>
        <name>UDP-N-acetyl-alpha-D-glucosamine</name>
        <dbReference type="ChEBI" id="CHEBI:57705"/>
    </ligand>
</feature>
<feature type="binding site" evidence="1">
    <location>
        <position position="125"/>
    </location>
    <ligand>
        <name>UDP-N-acetyl-alpha-D-glucosamine</name>
        <dbReference type="ChEBI" id="CHEBI:57705"/>
    </ligand>
</feature>
<feature type="binding site" evidence="1">
    <location>
        <position position="162"/>
    </location>
    <ligand>
        <name>UDP-N-acetyl-alpha-D-glucosamine</name>
        <dbReference type="ChEBI" id="CHEBI:57705"/>
    </ligand>
</feature>
<feature type="binding site" evidence="1">
    <location>
        <position position="196"/>
    </location>
    <ligand>
        <name>UDP-N-acetyl-alpha-D-glucosamine</name>
        <dbReference type="ChEBI" id="CHEBI:57705"/>
    </ligand>
</feature>
<feature type="binding site" evidence="1">
    <location>
        <position position="288"/>
    </location>
    <ligand>
        <name>UDP-N-acetyl-alpha-D-glucosamine</name>
        <dbReference type="ChEBI" id="CHEBI:57705"/>
    </ligand>
</feature>
<evidence type="ECO:0000255" key="1">
    <source>
        <dbReference type="HAMAP-Rule" id="MF_00033"/>
    </source>
</evidence>
<keyword id="KW-0131">Cell cycle</keyword>
<keyword id="KW-0132">Cell division</keyword>
<keyword id="KW-1003">Cell membrane</keyword>
<keyword id="KW-0133">Cell shape</keyword>
<keyword id="KW-0961">Cell wall biogenesis/degradation</keyword>
<keyword id="KW-0328">Glycosyltransferase</keyword>
<keyword id="KW-0472">Membrane</keyword>
<keyword id="KW-0573">Peptidoglycan synthesis</keyword>
<keyword id="KW-1185">Reference proteome</keyword>
<keyword id="KW-0808">Transferase</keyword>
<sequence>MTAYLLAGGGTAGHVNPLLAVADRLRRDDPAAEVLVLGTAEGLEARLVPARGYELATIPRLPFPRRPNAAAVRFPGEYRRSVRAVGELIRARGIAAVVGFGGYAAAPAYSAARKAAVPLILHEANARPGLASRLGARYTPWVGVAFEGTRLPHARFVGMPLRPEIEELDRVAARPAALAEFGLAADRPTLLVTGGSLGARRINQTIAARAVRLTEAGWQVLHIQGGRGELSDPGLPHYRLLGYCDRMDLALALADFAVARAGAATLCEFAALGVPAVYVPFPIGNGEQRHNAAGVVAAGGGVLVDDAGFLPAWVDAQLLPLLADRARVAEMAERAASVGVRDGSDRVVALIRTGLSAA</sequence>
<organism>
    <name type="scientific">Leifsonia xyli subsp. xyli (strain CTCB07)</name>
    <dbReference type="NCBI Taxonomy" id="281090"/>
    <lineage>
        <taxon>Bacteria</taxon>
        <taxon>Bacillati</taxon>
        <taxon>Actinomycetota</taxon>
        <taxon>Actinomycetes</taxon>
        <taxon>Micrococcales</taxon>
        <taxon>Microbacteriaceae</taxon>
        <taxon>Leifsonia</taxon>
    </lineage>
</organism>
<dbReference type="EC" id="2.4.1.227" evidence="1"/>
<dbReference type="EMBL" id="AE016822">
    <property type="protein sequence ID" value="AAT89332.1"/>
    <property type="molecule type" value="Genomic_DNA"/>
</dbReference>
<dbReference type="RefSeq" id="WP_011186322.1">
    <property type="nucleotide sequence ID" value="NC_006087.1"/>
</dbReference>
<dbReference type="SMR" id="Q6AE64"/>
<dbReference type="STRING" id="281090.Lxx15260"/>
<dbReference type="CAZy" id="GT28">
    <property type="family name" value="Glycosyltransferase Family 28"/>
</dbReference>
<dbReference type="KEGG" id="lxx:Lxx15260"/>
<dbReference type="eggNOG" id="COG0707">
    <property type="taxonomic scope" value="Bacteria"/>
</dbReference>
<dbReference type="HOGENOM" id="CLU_037404_1_0_11"/>
<dbReference type="UniPathway" id="UPA00219"/>
<dbReference type="Proteomes" id="UP000001306">
    <property type="component" value="Chromosome"/>
</dbReference>
<dbReference type="GO" id="GO:0005886">
    <property type="term" value="C:plasma membrane"/>
    <property type="evidence" value="ECO:0007669"/>
    <property type="project" value="UniProtKB-SubCell"/>
</dbReference>
<dbReference type="GO" id="GO:0051991">
    <property type="term" value="F:UDP-N-acetyl-D-glucosamine:N-acetylmuramoyl-L-alanyl-D-glutamyl-meso-2,6-diaminopimelyl-D-alanyl-D-alanine-diphosphoundecaprenol 4-beta-N-acetylglucosaminlytransferase activity"/>
    <property type="evidence" value="ECO:0007669"/>
    <property type="project" value="RHEA"/>
</dbReference>
<dbReference type="GO" id="GO:0050511">
    <property type="term" value="F:undecaprenyldiphospho-muramoylpentapeptide beta-N-acetylglucosaminyltransferase activity"/>
    <property type="evidence" value="ECO:0007669"/>
    <property type="project" value="UniProtKB-UniRule"/>
</dbReference>
<dbReference type="GO" id="GO:0005975">
    <property type="term" value="P:carbohydrate metabolic process"/>
    <property type="evidence" value="ECO:0007669"/>
    <property type="project" value="InterPro"/>
</dbReference>
<dbReference type="GO" id="GO:0051301">
    <property type="term" value="P:cell division"/>
    <property type="evidence" value="ECO:0007669"/>
    <property type="project" value="UniProtKB-KW"/>
</dbReference>
<dbReference type="GO" id="GO:0071555">
    <property type="term" value="P:cell wall organization"/>
    <property type="evidence" value="ECO:0007669"/>
    <property type="project" value="UniProtKB-KW"/>
</dbReference>
<dbReference type="GO" id="GO:0030259">
    <property type="term" value="P:lipid glycosylation"/>
    <property type="evidence" value="ECO:0007669"/>
    <property type="project" value="UniProtKB-UniRule"/>
</dbReference>
<dbReference type="GO" id="GO:0009252">
    <property type="term" value="P:peptidoglycan biosynthetic process"/>
    <property type="evidence" value="ECO:0007669"/>
    <property type="project" value="UniProtKB-UniRule"/>
</dbReference>
<dbReference type="GO" id="GO:0008360">
    <property type="term" value="P:regulation of cell shape"/>
    <property type="evidence" value="ECO:0007669"/>
    <property type="project" value="UniProtKB-KW"/>
</dbReference>
<dbReference type="CDD" id="cd03785">
    <property type="entry name" value="GT28_MurG"/>
    <property type="match status" value="1"/>
</dbReference>
<dbReference type="Gene3D" id="3.40.50.2000">
    <property type="entry name" value="Glycogen Phosphorylase B"/>
    <property type="match status" value="2"/>
</dbReference>
<dbReference type="HAMAP" id="MF_00033">
    <property type="entry name" value="MurG"/>
    <property type="match status" value="1"/>
</dbReference>
<dbReference type="InterPro" id="IPR006009">
    <property type="entry name" value="GlcNAc_MurG"/>
</dbReference>
<dbReference type="InterPro" id="IPR007235">
    <property type="entry name" value="Glyco_trans_28_C"/>
</dbReference>
<dbReference type="InterPro" id="IPR004276">
    <property type="entry name" value="GlycoTrans_28_N"/>
</dbReference>
<dbReference type="PANTHER" id="PTHR21015:SF22">
    <property type="entry name" value="GLYCOSYLTRANSFERASE"/>
    <property type="match status" value="1"/>
</dbReference>
<dbReference type="PANTHER" id="PTHR21015">
    <property type="entry name" value="UDP-N-ACETYLGLUCOSAMINE--N-ACETYLMURAMYL-(PENTAPEPTIDE) PYROPHOSPHORYL-UNDECAPRENOL N-ACETYLGLUCOSAMINE TRANSFERASE 1"/>
    <property type="match status" value="1"/>
</dbReference>
<dbReference type="Pfam" id="PF04101">
    <property type="entry name" value="Glyco_tran_28_C"/>
    <property type="match status" value="1"/>
</dbReference>
<dbReference type="Pfam" id="PF03033">
    <property type="entry name" value="Glyco_transf_28"/>
    <property type="match status" value="1"/>
</dbReference>
<dbReference type="SUPFAM" id="SSF53756">
    <property type="entry name" value="UDP-Glycosyltransferase/glycogen phosphorylase"/>
    <property type="match status" value="1"/>
</dbReference>
<name>MURG_LEIXX</name>
<gene>
    <name evidence="1" type="primary">murG</name>
    <name type="ordered locus">Lxx15260</name>
</gene>